<accession>Q9KVD5</accession>
<feature type="chain" id="PRO_0000110765" description="Orotate phosphoribosyltransferase">
    <location>
        <begin position="1"/>
        <end position="213"/>
    </location>
</feature>
<feature type="binding site" description="in other chain" evidence="1">
    <location>
        <position position="26"/>
    </location>
    <ligand>
        <name>5-phospho-alpha-D-ribose 1-diphosphate</name>
        <dbReference type="ChEBI" id="CHEBI:58017"/>
        <note>ligand shared between dimeric partners</note>
    </ligand>
</feature>
<feature type="binding site" evidence="1">
    <location>
        <begin position="34"/>
        <end position="35"/>
    </location>
    <ligand>
        <name>orotate</name>
        <dbReference type="ChEBI" id="CHEBI:30839"/>
    </ligand>
</feature>
<feature type="binding site" description="in other chain" evidence="1">
    <location>
        <begin position="72"/>
        <end position="73"/>
    </location>
    <ligand>
        <name>5-phospho-alpha-D-ribose 1-diphosphate</name>
        <dbReference type="ChEBI" id="CHEBI:58017"/>
        <note>ligand shared between dimeric partners</note>
    </ligand>
</feature>
<feature type="binding site" evidence="1">
    <location>
        <position position="99"/>
    </location>
    <ligand>
        <name>5-phospho-alpha-D-ribose 1-diphosphate</name>
        <dbReference type="ChEBI" id="CHEBI:58017"/>
        <note>ligand shared between dimeric partners</note>
    </ligand>
</feature>
<feature type="binding site" description="in other chain" evidence="1">
    <location>
        <position position="100"/>
    </location>
    <ligand>
        <name>5-phospho-alpha-D-ribose 1-diphosphate</name>
        <dbReference type="ChEBI" id="CHEBI:58017"/>
        <note>ligand shared between dimeric partners</note>
    </ligand>
</feature>
<feature type="binding site" evidence="1">
    <location>
        <position position="103"/>
    </location>
    <ligand>
        <name>5-phospho-alpha-D-ribose 1-diphosphate</name>
        <dbReference type="ChEBI" id="CHEBI:58017"/>
        <note>ligand shared between dimeric partners</note>
    </ligand>
</feature>
<feature type="binding site" evidence="1">
    <location>
        <position position="105"/>
    </location>
    <ligand>
        <name>5-phospho-alpha-D-ribose 1-diphosphate</name>
        <dbReference type="ChEBI" id="CHEBI:58017"/>
        <note>ligand shared between dimeric partners</note>
    </ligand>
</feature>
<feature type="binding site" description="in other chain" evidence="1">
    <location>
        <begin position="124"/>
        <end position="132"/>
    </location>
    <ligand>
        <name>5-phospho-alpha-D-ribose 1-diphosphate</name>
        <dbReference type="ChEBI" id="CHEBI:58017"/>
        <note>ligand shared between dimeric partners</note>
    </ligand>
</feature>
<feature type="binding site" evidence="1">
    <location>
        <position position="128"/>
    </location>
    <ligand>
        <name>orotate</name>
        <dbReference type="ChEBI" id="CHEBI:30839"/>
    </ligand>
</feature>
<feature type="binding site" evidence="1">
    <location>
        <position position="156"/>
    </location>
    <ligand>
        <name>orotate</name>
        <dbReference type="ChEBI" id="CHEBI:30839"/>
    </ligand>
</feature>
<feature type="helix" evidence="2">
    <location>
        <begin position="3"/>
        <end position="14"/>
    </location>
</feature>
<feature type="strand" evidence="2">
    <location>
        <begin position="17"/>
        <end position="24"/>
    </location>
</feature>
<feature type="strand" evidence="2">
    <location>
        <begin position="26"/>
        <end position="28"/>
    </location>
</feature>
<feature type="strand" evidence="2">
    <location>
        <begin position="30"/>
        <end position="35"/>
    </location>
</feature>
<feature type="helix" evidence="2">
    <location>
        <begin position="37"/>
        <end position="39"/>
    </location>
</feature>
<feature type="helix" evidence="2">
    <location>
        <begin position="43"/>
        <end position="60"/>
    </location>
</feature>
<feature type="strand" evidence="2">
    <location>
        <begin position="65"/>
        <end position="69"/>
    </location>
</feature>
<feature type="turn" evidence="2">
    <location>
        <begin position="71"/>
        <end position="73"/>
    </location>
</feature>
<feature type="helix" evidence="2">
    <location>
        <begin position="74"/>
        <end position="88"/>
    </location>
</feature>
<feature type="strand" evidence="2">
    <location>
        <begin position="94"/>
        <end position="98"/>
    </location>
</feature>
<feature type="strand" evidence="2">
    <location>
        <begin position="111"/>
        <end position="114"/>
    </location>
</feature>
<feature type="strand" evidence="2">
    <location>
        <begin position="118"/>
        <end position="123"/>
    </location>
</feature>
<feature type="strand" evidence="2">
    <location>
        <begin position="128"/>
        <end position="130"/>
    </location>
</feature>
<feature type="helix" evidence="2">
    <location>
        <begin position="131"/>
        <end position="142"/>
    </location>
</feature>
<feature type="strand" evidence="2">
    <location>
        <begin position="146"/>
        <end position="155"/>
    </location>
</feature>
<feature type="strand" evidence="2">
    <location>
        <begin position="161"/>
        <end position="165"/>
    </location>
</feature>
<feature type="helix" evidence="2">
    <location>
        <begin position="166"/>
        <end position="174"/>
    </location>
</feature>
<feature type="strand" evidence="2">
    <location>
        <begin position="177"/>
        <end position="183"/>
    </location>
</feature>
<feature type="helix" evidence="2">
    <location>
        <begin position="184"/>
        <end position="192"/>
    </location>
</feature>
<feature type="helix" evidence="2">
    <location>
        <begin position="197"/>
        <end position="211"/>
    </location>
</feature>
<gene>
    <name evidence="1" type="primary">pyrE</name>
    <name type="ordered locus">VC_0211</name>
</gene>
<comment type="function">
    <text evidence="1">Catalyzes the transfer of a ribosyl phosphate group from 5-phosphoribose 1-diphosphate to orotate, leading to the formation of orotidine monophosphate (OMP).</text>
</comment>
<comment type="catalytic activity">
    <reaction evidence="1">
        <text>orotidine 5'-phosphate + diphosphate = orotate + 5-phospho-alpha-D-ribose 1-diphosphate</text>
        <dbReference type="Rhea" id="RHEA:10380"/>
        <dbReference type="ChEBI" id="CHEBI:30839"/>
        <dbReference type="ChEBI" id="CHEBI:33019"/>
        <dbReference type="ChEBI" id="CHEBI:57538"/>
        <dbReference type="ChEBI" id="CHEBI:58017"/>
        <dbReference type="EC" id="2.4.2.10"/>
    </reaction>
</comment>
<comment type="cofactor">
    <cofactor evidence="1">
        <name>Mg(2+)</name>
        <dbReference type="ChEBI" id="CHEBI:18420"/>
    </cofactor>
</comment>
<comment type="pathway">
    <text evidence="1">Pyrimidine metabolism; UMP biosynthesis via de novo pathway; UMP from orotate: step 1/2.</text>
</comment>
<comment type="subunit">
    <text evidence="1">Homodimer.</text>
</comment>
<comment type="similarity">
    <text evidence="1">Belongs to the purine/pyrimidine phosphoribosyltransferase family. PyrE subfamily.</text>
</comment>
<protein>
    <recommendedName>
        <fullName evidence="1">Orotate phosphoribosyltransferase</fullName>
        <shortName evidence="1">OPRT</shortName>
        <shortName evidence="1">OPRTase</shortName>
        <ecNumber evidence="1">2.4.2.10</ecNumber>
    </recommendedName>
</protein>
<keyword id="KW-0002">3D-structure</keyword>
<keyword id="KW-0328">Glycosyltransferase</keyword>
<keyword id="KW-0460">Magnesium</keyword>
<keyword id="KW-0665">Pyrimidine biosynthesis</keyword>
<keyword id="KW-1185">Reference proteome</keyword>
<keyword id="KW-0808">Transferase</keyword>
<reference key="1">
    <citation type="journal article" date="2000" name="Nature">
        <title>DNA sequence of both chromosomes of the cholera pathogen Vibrio cholerae.</title>
        <authorList>
            <person name="Heidelberg J.F."/>
            <person name="Eisen J.A."/>
            <person name="Nelson W.C."/>
            <person name="Clayton R.A."/>
            <person name="Gwinn M.L."/>
            <person name="Dodson R.J."/>
            <person name="Haft D.H."/>
            <person name="Hickey E.K."/>
            <person name="Peterson J.D."/>
            <person name="Umayam L.A."/>
            <person name="Gill S.R."/>
            <person name="Nelson K.E."/>
            <person name="Read T.D."/>
            <person name="Tettelin H."/>
            <person name="Richardson D.L."/>
            <person name="Ermolaeva M.D."/>
            <person name="Vamathevan J.J."/>
            <person name="Bass S."/>
            <person name="Qin H."/>
            <person name="Dragoi I."/>
            <person name="Sellers P."/>
            <person name="McDonald L.A."/>
            <person name="Utterback T.R."/>
            <person name="Fleischmann R.D."/>
            <person name="Nierman W.C."/>
            <person name="White O."/>
            <person name="Salzberg S.L."/>
            <person name="Smith H.O."/>
            <person name="Colwell R.R."/>
            <person name="Mekalanos J.J."/>
            <person name="Venter J.C."/>
            <person name="Fraser C.M."/>
        </authorList>
    </citation>
    <scope>NUCLEOTIDE SEQUENCE [LARGE SCALE GENOMIC DNA]</scope>
    <source>
        <strain>ATCC 39315 / El Tor Inaba N16961</strain>
    </source>
</reference>
<organism>
    <name type="scientific">Vibrio cholerae serotype O1 (strain ATCC 39315 / El Tor Inaba N16961)</name>
    <dbReference type="NCBI Taxonomy" id="243277"/>
    <lineage>
        <taxon>Bacteria</taxon>
        <taxon>Pseudomonadati</taxon>
        <taxon>Pseudomonadota</taxon>
        <taxon>Gammaproteobacteria</taxon>
        <taxon>Vibrionales</taxon>
        <taxon>Vibrionaceae</taxon>
        <taxon>Vibrio</taxon>
    </lineage>
</organism>
<evidence type="ECO:0000255" key="1">
    <source>
        <dbReference type="HAMAP-Rule" id="MF_01208"/>
    </source>
</evidence>
<evidence type="ECO:0007829" key="2">
    <source>
        <dbReference type="PDB" id="3N2L"/>
    </source>
</evidence>
<sequence>MKAYQREFIEFALEKQVLKFGEFTLKSGRKSPYFFNAGLFNTGRDLARLGRFYAAALVDSGIEFDVLFGPAYKGIPIATTTAVALADHHDVDTPYCFNRKEAKNHGEGGNLVGSKLEGRVMLVDDVITAGTAIRESMELIQANKADLAGVLVAIDRQEKGKGELSAIQEVERDFGCAVISIVSLTDLITYLEQQGNNTEHLEAVKAYRAQYGI</sequence>
<dbReference type="EC" id="2.4.2.10" evidence="1"/>
<dbReference type="EMBL" id="AE003852">
    <property type="protein sequence ID" value="AAF93387.1"/>
    <property type="molecule type" value="Genomic_DNA"/>
</dbReference>
<dbReference type="PIR" id="E82350">
    <property type="entry name" value="E82350"/>
</dbReference>
<dbReference type="RefSeq" id="NP_229868.2">
    <property type="nucleotide sequence ID" value="NC_002505.1"/>
</dbReference>
<dbReference type="RefSeq" id="WP_001884129.1">
    <property type="nucleotide sequence ID" value="NZ_LT906614.1"/>
</dbReference>
<dbReference type="PDB" id="3N2L">
    <property type="method" value="X-ray"/>
    <property type="resolution" value="2.10 A"/>
    <property type="chains" value="A/B/C/D/E/F/G/H=1-213"/>
</dbReference>
<dbReference type="PDBsum" id="3N2L"/>
<dbReference type="SMR" id="Q9KVD5"/>
<dbReference type="STRING" id="243277.VC_0211"/>
<dbReference type="DNASU" id="2614710"/>
<dbReference type="EnsemblBacteria" id="AAF93387">
    <property type="protein sequence ID" value="AAF93387"/>
    <property type="gene ID" value="VC_0211"/>
</dbReference>
<dbReference type="KEGG" id="vch:VC_0211"/>
<dbReference type="PATRIC" id="fig|243277.26.peg.192"/>
<dbReference type="eggNOG" id="COG0461">
    <property type="taxonomic scope" value="Bacteria"/>
</dbReference>
<dbReference type="HOGENOM" id="CLU_074878_0_1_6"/>
<dbReference type="UniPathway" id="UPA00070">
    <property type="reaction ID" value="UER00119"/>
</dbReference>
<dbReference type="EvolutionaryTrace" id="Q9KVD5"/>
<dbReference type="Proteomes" id="UP000000584">
    <property type="component" value="Chromosome 1"/>
</dbReference>
<dbReference type="GO" id="GO:0005737">
    <property type="term" value="C:cytoplasm"/>
    <property type="evidence" value="ECO:0000318"/>
    <property type="project" value="GO_Central"/>
</dbReference>
<dbReference type="GO" id="GO:0000287">
    <property type="term" value="F:magnesium ion binding"/>
    <property type="evidence" value="ECO:0007669"/>
    <property type="project" value="UniProtKB-UniRule"/>
</dbReference>
<dbReference type="GO" id="GO:0004588">
    <property type="term" value="F:orotate phosphoribosyltransferase activity"/>
    <property type="evidence" value="ECO:0000318"/>
    <property type="project" value="GO_Central"/>
</dbReference>
<dbReference type="GO" id="GO:0006207">
    <property type="term" value="P:'de novo' pyrimidine nucleobase biosynthetic process"/>
    <property type="evidence" value="ECO:0000318"/>
    <property type="project" value="GO_Central"/>
</dbReference>
<dbReference type="GO" id="GO:0044205">
    <property type="term" value="P:'de novo' UMP biosynthetic process"/>
    <property type="evidence" value="ECO:0007669"/>
    <property type="project" value="UniProtKB-UniRule"/>
</dbReference>
<dbReference type="GO" id="GO:0006221">
    <property type="term" value="P:pyrimidine nucleotide biosynthetic process"/>
    <property type="evidence" value="ECO:0000318"/>
    <property type="project" value="GO_Central"/>
</dbReference>
<dbReference type="GO" id="GO:0046132">
    <property type="term" value="P:pyrimidine ribonucleoside biosynthetic process"/>
    <property type="evidence" value="ECO:0000318"/>
    <property type="project" value="GO_Central"/>
</dbReference>
<dbReference type="CDD" id="cd06223">
    <property type="entry name" value="PRTases_typeI"/>
    <property type="match status" value="1"/>
</dbReference>
<dbReference type="FunFam" id="3.40.50.2020:FF:000008">
    <property type="entry name" value="Orotate phosphoribosyltransferase"/>
    <property type="match status" value="1"/>
</dbReference>
<dbReference type="Gene3D" id="3.40.50.2020">
    <property type="match status" value="1"/>
</dbReference>
<dbReference type="HAMAP" id="MF_01208">
    <property type="entry name" value="PyrE"/>
    <property type="match status" value="1"/>
</dbReference>
<dbReference type="InterPro" id="IPR023031">
    <property type="entry name" value="OPRT"/>
</dbReference>
<dbReference type="InterPro" id="IPR004467">
    <property type="entry name" value="Or_phspho_trans_dom"/>
</dbReference>
<dbReference type="InterPro" id="IPR000836">
    <property type="entry name" value="PRibTrfase_dom"/>
</dbReference>
<dbReference type="InterPro" id="IPR029057">
    <property type="entry name" value="PRTase-like"/>
</dbReference>
<dbReference type="NCBIfam" id="TIGR00336">
    <property type="entry name" value="pyrE"/>
    <property type="match status" value="1"/>
</dbReference>
<dbReference type="PANTHER" id="PTHR46683">
    <property type="entry name" value="OROTATE PHOSPHORIBOSYLTRANSFERASE 1-RELATED"/>
    <property type="match status" value="1"/>
</dbReference>
<dbReference type="PANTHER" id="PTHR46683:SF1">
    <property type="entry name" value="OROTATE PHOSPHORIBOSYLTRANSFERASE 1-RELATED"/>
    <property type="match status" value="1"/>
</dbReference>
<dbReference type="Pfam" id="PF00156">
    <property type="entry name" value="Pribosyltran"/>
    <property type="match status" value="1"/>
</dbReference>
<dbReference type="SUPFAM" id="SSF53271">
    <property type="entry name" value="PRTase-like"/>
    <property type="match status" value="1"/>
</dbReference>
<dbReference type="PROSITE" id="PS00103">
    <property type="entry name" value="PUR_PYR_PR_TRANSFER"/>
    <property type="match status" value="1"/>
</dbReference>
<proteinExistence type="evidence at protein level"/>
<name>PYRE_VIBCH</name>